<comment type="function">
    <text evidence="1">Located at the top of the head of the 30S subunit, it contacts several helices of the 16S rRNA. In the 70S ribosome it contacts the 23S rRNA (bridge B1a) and protein L5 of the 50S subunit (bridge B1b), connecting the 2 subunits; these bridges are implicated in subunit movement. Contacts the tRNAs in the A and P-sites.</text>
</comment>
<comment type="subunit">
    <text evidence="1">Part of the 30S ribosomal subunit. Forms a loose heterodimer with protein S19. Forms two bridges to the 50S subunit in the 70S ribosome.</text>
</comment>
<comment type="similarity">
    <text evidence="1">Belongs to the universal ribosomal protein uS13 family.</text>
</comment>
<proteinExistence type="evidence at protein level"/>
<name>RS13_STAAW</name>
<reference key="1">
    <citation type="journal article" date="2002" name="Lancet">
        <title>Genome and virulence determinants of high virulence community-acquired MRSA.</title>
        <authorList>
            <person name="Baba T."/>
            <person name="Takeuchi F."/>
            <person name="Kuroda M."/>
            <person name="Yuzawa H."/>
            <person name="Aoki K."/>
            <person name="Oguchi A."/>
            <person name="Nagai Y."/>
            <person name="Iwama N."/>
            <person name="Asano K."/>
            <person name="Naimi T."/>
            <person name="Kuroda H."/>
            <person name="Cui L."/>
            <person name="Yamamoto K."/>
            <person name="Hiramatsu K."/>
        </authorList>
    </citation>
    <scope>NUCLEOTIDE SEQUENCE [LARGE SCALE GENOMIC DNA]</scope>
    <source>
        <strain>MW2</strain>
    </source>
</reference>
<feature type="chain" id="PRO_0000132139" description="Small ribosomal subunit protein uS13">
    <location>
        <begin position="1"/>
        <end position="121"/>
    </location>
</feature>
<feature type="region of interest" description="Disordered" evidence="2">
    <location>
        <begin position="91"/>
        <end position="121"/>
    </location>
</feature>
<keyword id="KW-0002">3D-structure</keyword>
<keyword id="KW-0687">Ribonucleoprotein</keyword>
<keyword id="KW-0689">Ribosomal protein</keyword>
<keyword id="KW-0694">RNA-binding</keyword>
<keyword id="KW-0699">rRNA-binding</keyword>
<keyword id="KW-0820">tRNA-binding</keyword>
<gene>
    <name evidence="1" type="primary">rpsM</name>
    <name type="ordered locus">MW2145</name>
</gene>
<dbReference type="EMBL" id="BA000033">
    <property type="protein sequence ID" value="BAB96010.1"/>
    <property type="molecule type" value="Genomic_DNA"/>
</dbReference>
<dbReference type="RefSeq" id="WP_000090796.1">
    <property type="nucleotide sequence ID" value="NC_003923.1"/>
</dbReference>
<dbReference type="PDB" id="8Y38">
    <property type="method" value="EM"/>
    <property type="resolution" value="2.58 A"/>
    <property type="chains" value="m=1-121"/>
</dbReference>
<dbReference type="PDB" id="8Y39">
    <property type="method" value="EM"/>
    <property type="resolution" value="3.60 A"/>
    <property type="chains" value="m=1-121"/>
</dbReference>
<dbReference type="PDBsum" id="8Y38"/>
<dbReference type="PDBsum" id="8Y39"/>
<dbReference type="EMDB" id="EMD-38875"/>
<dbReference type="EMDB" id="EMD-38876"/>
<dbReference type="SMR" id="P66389"/>
<dbReference type="GeneID" id="66840438"/>
<dbReference type="KEGG" id="sam:MW2145"/>
<dbReference type="HOGENOM" id="CLU_103849_1_1_9"/>
<dbReference type="GO" id="GO:0005829">
    <property type="term" value="C:cytosol"/>
    <property type="evidence" value="ECO:0007669"/>
    <property type="project" value="TreeGrafter"/>
</dbReference>
<dbReference type="GO" id="GO:0015935">
    <property type="term" value="C:small ribosomal subunit"/>
    <property type="evidence" value="ECO:0007669"/>
    <property type="project" value="TreeGrafter"/>
</dbReference>
<dbReference type="GO" id="GO:0019843">
    <property type="term" value="F:rRNA binding"/>
    <property type="evidence" value="ECO:0007669"/>
    <property type="project" value="UniProtKB-UniRule"/>
</dbReference>
<dbReference type="GO" id="GO:0003735">
    <property type="term" value="F:structural constituent of ribosome"/>
    <property type="evidence" value="ECO:0007669"/>
    <property type="project" value="InterPro"/>
</dbReference>
<dbReference type="GO" id="GO:0000049">
    <property type="term" value="F:tRNA binding"/>
    <property type="evidence" value="ECO:0007669"/>
    <property type="project" value="UniProtKB-UniRule"/>
</dbReference>
<dbReference type="GO" id="GO:0006412">
    <property type="term" value="P:translation"/>
    <property type="evidence" value="ECO:0007669"/>
    <property type="project" value="UniProtKB-UniRule"/>
</dbReference>
<dbReference type="FunFam" id="1.10.8.50:FF:000001">
    <property type="entry name" value="30S ribosomal protein S13"/>
    <property type="match status" value="1"/>
</dbReference>
<dbReference type="FunFam" id="4.10.910.10:FF:000001">
    <property type="entry name" value="30S ribosomal protein S13"/>
    <property type="match status" value="1"/>
</dbReference>
<dbReference type="Gene3D" id="1.10.8.50">
    <property type="match status" value="1"/>
</dbReference>
<dbReference type="Gene3D" id="4.10.910.10">
    <property type="entry name" value="30s ribosomal protein s13, domain 2"/>
    <property type="match status" value="1"/>
</dbReference>
<dbReference type="HAMAP" id="MF_01315">
    <property type="entry name" value="Ribosomal_uS13"/>
    <property type="match status" value="1"/>
</dbReference>
<dbReference type="InterPro" id="IPR027437">
    <property type="entry name" value="Rbsml_uS13_C"/>
</dbReference>
<dbReference type="InterPro" id="IPR001892">
    <property type="entry name" value="Ribosomal_uS13"/>
</dbReference>
<dbReference type="InterPro" id="IPR010979">
    <property type="entry name" value="Ribosomal_uS13-like_H2TH"/>
</dbReference>
<dbReference type="InterPro" id="IPR019980">
    <property type="entry name" value="Ribosomal_uS13_bac-type"/>
</dbReference>
<dbReference type="InterPro" id="IPR018269">
    <property type="entry name" value="Ribosomal_uS13_CS"/>
</dbReference>
<dbReference type="NCBIfam" id="TIGR03631">
    <property type="entry name" value="uS13_bact"/>
    <property type="match status" value="1"/>
</dbReference>
<dbReference type="PANTHER" id="PTHR10871">
    <property type="entry name" value="30S RIBOSOMAL PROTEIN S13/40S RIBOSOMAL PROTEIN S18"/>
    <property type="match status" value="1"/>
</dbReference>
<dbReference type="PANTHER" id="PTHR10871:SF1">
    <property type="entry name" value="SMALL RIBOSOMAL SUBUNIT PROTEIN US13M"/>
    <property type="match status" value="1"/>
</dbReference>
<dbReference type="Pfam" id="PF00416">
    <property type="entry name" value="Ribosomal_S13"/>
    <property type="match status" value="1"/>
</dbReference>
<dbReference type="PIRSF" id="PIRSF002134">
    <property type="entry name" value="Ribosomal_S13"/>
    <property type="match status" value="1"/>
</dbReference>
<dbReference type="SUPFAM" id="SSF46946">
    <property type="entry name" value="S13-like H2TH domain"/>
    <property type="match status" value="1"/>
</dbReference>
<dbReference type="PROSITE" id="PS00646">
    <property type="entry name" value="RIBOSOMAL_S13_1"/>
    <property type="match status" value="1"/>
</dbReference>
<dbReference type="PROSITE" id="PS50159">
    <property type="entry name" value="RIBOSOMAL_S13_2"/>
    <property type="match status" value="1"/>
</dbReference>
<organism>
    <name type="scientific">Staphylococcus aureus (strain MW2)</name>
    <dbReference type="NCBI Taxonomy" id="196620"/>
    <lineage>
        <taxon>Bacteria</taxon>
        <taxon>Bacillati</taxon>
        <taxon>Bacillota</taxon>
        <taxon>Bacilli</taxon>
        <taxon>Bacillales</taxon>
        <taxon>Staphylococcaceae</taxon>
        <taxon>Staphylococcus</taxon>
    </lineage>
</organism>
<protein>
    <recommendedName>
        <fullName evidence="1">Small ribosomal subunit protein uS13</fullName>
    </recommendedName>
    <alternativeName>
        <fullName evidence="3">30S ribosomal protein S13</fullName>
    </alternativeName>
</protein>
<accession>P66389</accession>
<accession>Q99S43</accession>
<sequence>MARIAGVDIPREKRVVISLTYIYGIGTSTAQKILEEANVSADTRVKDLTDDELGRIREVVDGYKVEGDLRRETNLNIKRLMEISSYRGIRHRRGLPVRGQKTKNNARTRKGPVKTVANKKK</sequence>
<evidence type="ECO:0000255" key="1">
    <source>
        <dbReference type="HAMAP-Rule" id="MF_01315"/>
    </source>
</evidence>
<evidence type="ECO:0000256" key="2">
    <source>
        <dbReference type="SAM" id="MobiDB-lite"/>
    </source>
</evidence>
<evidence type="ECO:0000305" key="3"/>